<accession>Q7TUL5</accession>
<feature type="chain" id="PRO_0000245684" description="NAD(P)H-quinone oxidoreductase subunit I">
    <location>
        <begin position="1"/>
        <end position="218"/>
    </location>
</feature>
<feature type="domain" description="4Fe-4S ferredoxin-type 1" evidence="1">
    <location>
        <begin position="55"/>
        <end position="84"/>
    </location>
</feature>
<feature type="domain" description="4Fe-4S ferredoxin-type 2" evidence="1">
    <location>
        <begin position="95"/>
        <end position="124"/>
    </location>
</feature>
<feature type="region of interest" description="Disordered" evidence="2">
    <location>
        <begin position="169"/>
        <end position="218"/>
    </location>
</feature>
<feature type="compositionally biased region" description="Polar residues" evidence="2">
    <location>
        <begin position="208"/>
        <end position="218"/>
    </location>
</feature>
<feature type="binding site" evidence="1">
    <location>
        <position position="64"/>
    </location>
    <ligand>
        <name>[4Fe-4S] cluster</name>
        <dbReference type="ChEBI" id="CHEBI:49883"/>
        <label>1</label>
    </ligand>
</feature>
<feature type="binding site" evidence="1">
    <location>
        <position position="67"/>
    </location>
    <ligand>
        <name>[4Fe-4S] cluster</name>
        <dbReference type="ChEBI" id="CHEBI:49883"/>
        <label>1</label>
    </ligand>
</feature>
<feature type="binding site" evidence="1">
    <location>
        <position position="70"/>
    </location>
    <ligand>
        <name>[4Fe-4S] cluster</name>
        <dbReference type="ChEBI" id="CHEBI:49883"/>
        <label>1</label>
    </ligand>
</feature>
<feature type="binding site" evidence="1">
    <location>
        <position position="74"/>
    </location>
    <ligand>
        <name>[4Fe-4S] cluster</name>
        <dbReference type="ChEBI" id="CHEBI:49883"/>
        <label>2</label>
    </ligand>
</feature>
<feature type="binding site" evidence="1">
    <location>
        <position position="104"/>
    </location>
    <ligand>
        <name>[4Fe-4S] cluster</name>
        <dbReference type="ChEBI" id="CHEBI:49883"/>
        <label>2</label>
    </ligand>
</feature>
<feature type="binding site" evidence="1">
    <location>
        <position position="107"/>
    </location>
    <ligand>
        <name>[4Fe-4S] cluster</name>
        <dbReference type="ChEBI" id="CHEBI:49883"/>
        <label>2</label>
    </ligand>
</feature>
<feature type="binding site" evidence="1">
    <location>
        <position position="110"/>
    </location>
    <ligand>
        <name>[4Fe-4S] cluster</name>
        <dbReference type="ChEBI" id="CHEBI:49883"/>
        <label>2</label>
    </ligand>
</feature>
<feature type="binding site" evidence="1">
    <location>
        <position position="114"/>
    </location>
    <ligand>
        <name>[4Fe-4S] cluster</name>
        <dbReference type="ChEBI" id="CHEBI:49883"/>
        <label>1</label>
    </ligand>
</feature>
<dbReference type="EC" id="7.1.1.-" evidence="1"/>
<dbReference type="EMBL" id="BX548175">
    <property type="protein sequence ID" value="CAE22193.1"/>
    <property type="molecule type" value="Genomic_DNA"/>
</dbReference>
<dbReference type="RefSeq" id="WP_011131384.1">
    <property type="nucleotide sequence ID" value="NC_005071.1"/>
</dbReference>
<dbReference type="SMR" id="Q7TUL5"/>
<dbReference type="KEGG" id="pmt:PMT_2019"/>
<dbReference type="eggNOG" id="COG1143">
    <property type="taxonomic scope" value="Bacteria"/>
</dbReference>
<dbReference type="HOGENOM" id="CLU_122804_0_0_3"/>
<dbReference type="OrthoDB" id="9798098at2"/>
<dbReference type="Proteomes" id="UP000001423">
    <property type="component" value="Chromosome"/>
</dbReference>
<dbReference type="GO" id="GO:0031676">
    <property type="term" value="C:plasma membrane-derived thylakoid membrane"/>
    <property type="evidence" value="ECO:0007669"/>
    <property type="project" value="UniProtKB-SubCell"/>
</dbReference>
<dbReference type="GO" id="GO:0051539">
    <property type="term" value="F:4 iron, 4 sulfur cluster binding"/>
    <property type="evidence" value="ECO:0007669"/>
    <property type="project" value="UniProtKB-KW"/>
</dbReference>
<dbReference type="GO" id="GO:0005506">
    <property type="term" value="F:iron ion binding"/>
    <property type="evidence" value="ECO:0007669"/>
    <property type="project" value="UniProtKB-UniRule"/>
</dbReference>
<dbReference type="GO" id="GO:0008137">
    <property type="term" value="F:NADH dehydrogenase (ubiquinone) activity"/>
    <property type="evidence" value="ECO:0007669"/>
    <property type="project" value="InterPro"/>
</dbReference>
<dbReference type="GO" id="GO:0048038">
    <property type="term" value="F:quinone binding"/>
    <property type="evidence" value="ECO:0007669"/>
    <property type="project" value="UniProtKB-KW"/>
</dbReference>
<dbReference type="GO" id="GO:0019684">
    <property type="term" value="P:photosynthesis, light reaction"/>
    <property type="evidence" value="ECO:0007669"/>
    <property type="project" value="UniProtKB-UniRule"/>
</dbReference>
<dbReference type="Gene3D" id="3.30.70.3270">
    <property type="match status" value="1"/>
</dbReference>
<dbReference type="HAMAP" id="MF_01351">
    <property type="entry name" value="NDH1_NuoI"/>
    <property type="match status" value="1"/>
</dbReference>
<dbReference type="InterPro" id="IPR017896">
    <property type="entry name" value="4Fe4S_Fe-S-bd"/>
</dbReference>
<dbReference type="InterPro" id="IPR017900">
    <property type="entry name" value="4Fe4S_Fe_S_CS"/>
</dbReference>
<dbReference type="InterPro" id="IPR010226">
    <property type="entry name" value="NADH_quinone_OxRdtase_chainI"/>
</dbReference>
<dbReference type="InterPro" id="IPR004497">
    <property type="entry name" value="NDHI"/>
</dbReference>
<dbReference type="NCBIfam" id="TIGR00403">
    <property type="entry name" value="ndhI"/>
    <property type="match status" value="1"/>
</dbReference>
<dbReference type="NCBIfam" id="TIGR01971">
    <property type="entry name" value="NuoI"/>
    <property type="match status" value="1"/>
</dbReference>
<dbReference type="NCBIfam" id="NF004537">
    <property type="entry name" value="PRK05888.1-3"/>
    <property type="match status" value="1"/>
</dbReference>
<dbReference type="PANTHER" id="PTHR47275">
    <property type="entry name" value="NAD(P)H-QUINONE OXIDOREDUCTASE SUBUNIT I, CHLOROPLASTIC"/>
    <property type="match status" value="1"/>
</dbReference>
<dbReference type="PANTHER" id="PTHR47275:SF1">
    <property type="entry name" value="NAD(P)H-QUINONE OXIDOREDUCTASE SUBUNIT I, CHLOROPLASTIC"/>
    <property type="match status" value="1"/>
</dbReference>
<dbReference type="Pfam" id="PF12838">
    <property type="entry name" value="Fer4_7"/>
    <property type="match status" value="1"/>
</dbReference>
<dbReference type="SUPFAM" id="SSF54862">
    <property type="entry name" value="4Fe-4S ferredoxins"/>
    <property type="match status" value="1"/>
</dbReference>
<dbReference type="PROSITE" id="PS00198">
    <property type="entry name" value="4FE4S_FER_1"/>
    <property type="match status" value="2"/>
</dbReference>
<dbReference type="PROSITE" id="PS51379">
    <property type="entry name" value="4FE4S_FER_2"/>
    <property type="match status" value="2"/>
</dbReference>
<evidence type="ECO:0000255" key="1">
    <source>
        <dbReference type="HAMAP-Rule" id="MF_01351"/>
    </source>
</evidence>
<evidence type="ECO:0000256" key="2">
    <source>
        <dbReference type="SAM" id="MobiDB-lite"/>
    </source>
</evidence>
<protein>
    <recommendedName>
        <fullName evidence="1">NAD(P)H-quinone oxidoreductase subunit I</fullName>
        <ecNumber evidence="1">7.1.1.-</ecNumber>
    </recommendedName>
    <alternativeName>
        <fullName evidence="1">NAD(P)H dehydrogenase I subunit I</fullName>
    </alternativeName>
    <alternativeName>
        <fullName evidence="1">NDH-1 subunit I</fullName>
        <shortName evidence="1">NDH-I</shortName>
    </alternativeName>
</protein>
<reference key="1">
    <citation type="journal article" date="2003" name="Nature">
        <title>Genome divergence in two Prochlorococcus ecotypes reflects oceanic niche differentiation.</title>
        <authorList>
            <person name="Rocap G."/>
            <person name="Larimer F.W."/>
            <person name="Lamerdin J.E."/>
            <person name="Malfatti S."/>
            <person name="Chain P."/>
            <person name="Ahlgren N.A."/>
            <person name="Arellano A."/>
            <person name="Coleman M."/>
            <person name="Hauser L."/>
            <person name="Hess W.R."/>
            <person name="Johnson Z.I."/>
            <person name="Land M.L."/>
            <person name="Lindell D."/>
            <person name="Post A.F."/>
            <person name="Regala W."/>
            <person name="Shah M."/>
            <person name="Shaw S.L."/>
            <person name="Steglich C."/>
            <person name="Sullivan M.B."/>
            <person name="Ting C.S."/>
            <person name="Tolonen A."/>
            <person name="Webb E.A."/>
            <person name="Zinser E.R."/>
            <person name="Chisholm S.W."/>
        </authorList>
    </citation>
    <scope>NUCLEOTIDE SEQUENCE [LARGE SCALE GENOMIC DNA]</scope>
    <source>
        <strain>MIT 9313</strain>
    </source>
</reference>
<keyword id="KW-0004">4Fe-4S</keyword>
<keyword id="KW-0408">Iron</keyword>
<keyword id="KW-0411">Iron-sulfur</keyword>
<keyword id="KW-0472">Membrane</keyword>
<keyword id="KW-0479">Metal-binding</keyword>
<keyword id="KW-0520">NAD</keyword>
<keyword id="KW-0521">NADP</keyword>
<keyword id="KW-0618">Plastoquinone</keyword>
<keyword id="KW-0874">Quinone</keyword>
<keyword id="KW-1185">Reference proteome</keyword>
<keyword id="KW-0677">Repeat</keyword>
<keyword id="KW-0793">Thylakoid</keyword>
<keyword id="KW-1278">Translocase</keyword>
<comment type="function">
    <text evidence="1">NDH-1 shuttles electrons from an unknown electron donor, via FMN and iron-sulfur (Fe-S) centers, to quinones in the respiratory and/or the photosynthetic chain. The immediate electron acceptor for the enzyme in this species is believed to be plastoquinone. Couples the redox reaction to proton translocation, and thus conserves the redox energy in a proton gradient.</text>
</comment>
<comment type="catalytic activity">
    <reaction evidence="1">
        <text>a plastoquinone + NADH + (n+1) H(+)(in) = a plastoquinol + NAD(+) + n H(+)(out)</text>
        <dbReference type="Rhea" id="RHEA:42608"/>
        <dbReference type="Rhea" id="RHEA-COMP:9561"/>
        <dbReference type="Rhea" id="RHEA-COMP:9562"/>
        <dbReference type="ChEBI" id="CHEBI:15378"/>
        <dbReference type="ChEBI" id="CHEBI:17757"/>
        <dbReference type="ChEBI" id="CHEBI:57540"/>
        <dbReference type="ChEBI" id="CHEBI:57945"/>
        <dbReference type="ChEBI" id="CHEBI:62192"/>
    </reaction>
</comment>
<comment type="catalytic activity">
    <reaction evidence="1">
        <text>a plastoquinone + NADPH + (n+1) H(+)(in) = a plastoquinol + NADP(+) + n H(+)(out)</text>
        <dbReference type="Rhea" id="RHEA:42612"/>
        <dbReference type="Rhea" id="RHEA-COMP:9561"/>
        <dbReference type="Rhea" id="RHEA-COMP:9562"/>
        <dbReference type="ChEBI" id="CHEBI:15378"/>
        <dbReference type="ChEBI" id="CHEBI:17757"/>
        <dbReference type="ChEBI" id="CHEBI:57783"/>
        <dbReference type="ChEBI" id="CHEBI:58349"/>
        <dbReference type="ChEBI" id="CHEBI:62192"/>
    </reaction>
</comment>
<comment type="cofactor">
    <cofactor evidence="1">
        <name>[4Fe-4S] cluster</name>
        <dbReference type="ChEBI" id="CHEBI:49883"/>
    </cofactor>
    <text evidence="1">Binds 2 [4Fe-4S] clusters per subunit.</text>
</comment>
<comment type="subunit">
    <text evidence="1">NDH-1 is composed of at least 11 different subunits.</text>
</comment>
<comment type="subcellular location">
    <subcellularLocation>
        <location evidence="1">Cellular thylakoid membrane</location>
        <topology evidence="1">Peripheral membrane protein</topology>
    </subcellularLocation>
</comment>
<comment type="similarity">
    <text evidence="1">Belongs to the complex I 23 kDa subunit family.</text>
</comment>
<gene>
    <name evidence="1" type="primary">ndhI</name>
    <name type="ordered locus">PMT_2019</name>
</gene>
<proteinExistence type="inferred from homology"/>
<name>NDHI_PROMM</name>
<sequence>MFGFLKKVVDYTRDAADAANYLIQGLAVTFDHLRRRPITVQYPYEKLIPSERYRGRIHYEFDKCIACEVCVRVCPINLPVVDWVMNKETKKKELRNYSIDFGVCIFCGNCVEYCPTNCLSMTEEYELAAYDRHSLNYDNVALGRLPTSVTTDPSVQPLRELAYLPKGVMDPHDVPANQPRAGQLPAEALKSLSLQQESVQGDEGESLQDASDQDQPSG</sequence>
<organism>
    <name type="scientific">Prochlorococcus marinus (strain MIT 9313)</name>
    <dbReference type="NCBI Taxonomy" id="74547"/>
    <lineage>
        <taxon>Bacteria</taxon>
        <taxon>Bacillati</taxon>
        <taxon>Cyanobacteriota</taxon>
        <taxon>Cyanophyceae</taxon>
        <taxon>Synechococcales</taxon>
        <taxon>Prochlorococcaceae</taxon>
        <taxon>Prochlorococcus</taxon>
    </lineage>
</organism>